<comment type="function">
    <text evidence="7">Aerial growth, conidiation, and dispersal of filamentous fungi in the environment rely upon a capability of their secreting small amphipathic proteins called hydrophobins (HPBs) with low sequence identity. Class I can self-assemble into an outermost layer of rodlet bundles on aerial cell surfaces, conferring cellular hydrophobicity that supports fungal growth, development and dispersal; whereas Class II form highly ordered films at water-air interfaces through intermolecular interactions but contribute nothing to the rodlet structure.</text>
</comment>
<comment type="subunit">
    <text evidence="4 5">Self-assembles to form functional amyloid fibrils called rodlets. Self-assembly into fibrillar rodlets occurs spontaneously at hydrophobic:hydrophilic interfaces and the rodlets further associate laterally to form amphipathic monolayers.</text>
</comment>
<comment type="subcellular location">
    <subcellularLocation>
        <location evidence="1">Secreted</location>
    </subcellularLocation>
    <subcellularLocation>
        <location evidence="1">Secreted</location>
        <location evidence="1">Cell wall</location>
    </subcellularLocation>
</comment>
<comment type="domain">
    <text evidence="5">The N-terminal tail up to Lys-31 is not required for self-assembly into rodlets and is amenable to modification so that functionalized hydrophobin assemblies can be created.</text>
</comment>
<comment type="similarity">
    <text evidence="7">Belongs to the fungal hydrophobin family.</text>
</comment>
<organism>
    <name type="scientific">Schizophyllum commune (strain H4-8 / FGSC 9210)</name>
    <name type="common">Split gill fungus</name>
    <dbReference type="NCBI Taxonomy" id="578458"/>
    <lineage>
        <taxon>Eukaryota</taxon>
        <taxon>Fungi</taxon>
        <taxon>Dikarya</taxon>
        <taxon>Basidiomycota</taxon>
        <taxon>Agaricomycotina</taxon>
        <taxon>Agaricomycetes</taxon>
        <taxon>Agaricomycetidae</taxon>
        <taxon>Agaricales</taxon>
        <taxon>Schizophyllaceae</taxon>
        <taxon>Schizophyllum</taxon>
    </lineage>
</organism>
<keyword id="KW-0002">3D-structure</keyword>
<keyword id="KW-0134">Cell wall</keyword>
<keyword id="KW-1015">Disulfide bond</keyword>
<keyword id="KW-0325">Glycoprotein</keyword>
<keyword id="KW-1185">Reference proteome</keyword>
<keyword id="KW-0964">Secreted</keyword>
<keyword id="KW-0732">Signal</keyword>
<sequence length="114" mass="11693">MRFFATLVLALPALAMATAVPRDVNGGTPPKSCSSGPVYCCNKTEDHLDKGTTALLGLLNIKIGDLKDLVGLNCSPLSVIGVGGNSCSAQTVCCTNTYQHGLVNVGCTPINIGL</sequence>
<dbReference type="EMBL" id="GL377309">
    <property type="protein sequence ID" value="EFI94929.1"/>
    <property type="molecule type" value="Genomic_DNA"/>
</dbReference>
<dbReference type="RefSeq" id="XP_003029832.1">
    <property type="nucleotide sequence ID" value="XM_003029786.1"/>
</dbReference>
<dbReference type="PDB" id="2NBH">
    <property type="method" value="NMR"/>
    <property type="chains" value="A=18-114"/>
</dbReference>
<dbReference type="PDB" id="7S7S">
    <property type="method" value="X-ray"/>
    <property type="resolution" value="2.20 A"/>
    <property type="chains" value="A=18-114"/>
</dbReference>
<dbReference type="PDB" id="7S86">
    <property type="method" value="X-ray"/>
    <property type="resolution" value="2.00 A"/>
    <property type="chains" value="A=18-114"/>
</dbReference>
<dbReference type="PDBsum" id="2NBH"/>
<dbReference type="PDBsum" id="7S7S"/>
<dbReference type="PDBsum" id="7S86"/>
<dbReference type="BMRB" id="D8QCG9"/>
<dbReference type="SMR" id="D8QCG9"/>
<dbReference type="STRING" id="578458.D8QCG9"/>
<dbReference type="VEuPathDB" id="FungiDB:SCHCODRAFT_02634970"/>
<dbReference type="eggNOG" id="ENOG502R1ZA">
    <property type="taxonomic scope" value="Eukaryota"/>
</dbReference>
<dbReference type="HOGENOM" id="CLU_105134_3_1_1"/>
<dbReference type="InParanoid" id="D8QCG9"/>
<dbReference type="OMA" id="SIQCCNA"/>
<dbReference type="Proteomes" id="UP000007431">
    <property type="component" value="Unassembled WGS sequence"/>
</dbReference>
<dbReference type="GO" id="GO:0005576">
    <property type="term" value="C:extracellular region"/>
    <property type="evidence" value="ECO:0007669"/>
    <property type="project" value="UniProtKB-KW"/>
</dbReference>
<dbReference type="GO" id="GO:0009277">
    <property type="term" value="C:fungal-type cell wall"/>
    <property type="evidence" value="ECO:0007669"/>
    <property type="project" value="InterPro"/>
</dbReference>
<dbReference type="GO" id="GO:0005199">
    <property type="term" value="F:structural constituent of cell wall"/>
    <property type="evidence" value="ECO:0007669"/>
    <property type="project" value="InterPro"/>
</dbReference>
<dbReference type="CDD" id="cd23507">
    <property type="entry name" value="hydrophobin_I"/>
    <property type="match status" value="1"/>
</dbReference>
<dbReference type="InterPro" id="IPR001338">
    <property type="entry name" value="Hydrophobin"/>
</dbReference>
<dbReference type="InterPro" id="IPR019778">
    <property type="entry name" value="Hydrophobin_CS"/>
</dbReference>
<dbReference type="Pfam" id="PF01185">
    <property type="entry name" value="Hydrophobin"/>
    <property type="match status" value="1"/>
</dbReference>
<dbReference type="SMART" id="SM00075">
    <property type="entry name" value="HYDRO"/>
    <property type="match status" value="1"/>
</dbReference>
<dbReference type="PROSITE" id="PS00956">
    <property type="entry name" value="HYDROPHOBIN"/>
    <property type="match status" value="1"/>
</dbReference>
<gene>
    <name evidence="6" type="primary">SC16</name>
    <name evidence="6" type="synonym">HYD1</name>
    <name type="ORF">SCHCODRAFT_58269</name>
</gene>
<reference key="1">
    <citation type="journal article" date="2010" name="Nat. Biotechnol.">
        <title>Genome sequence of the model mushroom Schizophyllum commune.</title>
        <authorList>
            <person name="Ohm R.A."/>
            <person name="de Jong J.F."/>
            <person name="Lugones L.G."/>
            <person name="Aerts A."/>
            <person name="Kothe E."/>
            <person name="Stajich J.E."/>
            <person name="de Vries R.P."/>
            <person name="Record E."/>
            <person name="Levasseur A."/>
            <person name="Baker S.E."/>
            <person name="Bartholomew K.A."/>
            <person name="Coutinho P.M."/>
            <person name="Erdmann S."/>
            <person name="Fowler T.J."/>
            <person name="Gathman A.C."/>
            <person name="Lombard V."/>
            <person name="Henrissat B."/>
            <person name="Knabe N."/>
            <person name="Kuees U."/>
            <person name="Lilly W.W."/>
            <person name="Lindquist E."/>
            <person name="Lucas S."/>
            <person name="Magnuson J.K."/>
            <person name="Piumi F."/>
            <person name="Raudaskoski M."/>
            <person name="Salamov A."/>
            <person name="Schmutz J."/>
            <person name="Schwarze F.W.M.R."/>
            <person name="vanKuyk P.A."/>
            <person name="Horton J.S."/>
            <person name="Grigoriev I.V."/>
            <person name="Woesten H.A.B."/>
        </authorList>
    </citation>
    <scope>NUCLEOTIDE SEQUENCE [LARGE SCALE GENOMIC DNA]</scope>
    <source>
        <strain>H4-8 / FGSC 9210</strain>
    </source>
</reference>
<reference evidence="8" key="2">
    <citation type="journal article" date="2017" name="Sci. Rep.">
        <title>Characterization of a Basidiomycota hydrophobin reveals the structural basis for a high-similarity Class I subdivision.</title>
        <authorList>
            <person name="Gandier J.A."/>
            <person name="Langelaan D.N."/>
            <person name="Won A."/>
            <person name="O'Donnell K."/>
            <person name="Grondin J.L."/>
            <person name="Spencer H.L."/>
            <person name="Wong P."/>
            <person name="Tillier E."/>
            <person name="Yip C."/>
            <person name="Smith S.P."/>
            <person name="Master E.R."/>
        </authorList>
    </citation>
    <scope>STRUCTURE BY NMR OF 18-114</scope>
    <scope>DISULFIDE BONDS</scope>
    <scope>SUBUNIT</scope>
</reference>
<reference evidence="9 10" key="3">
    <citation type="journal article" date="2022" name="Sci. Rep.">
        <title>The N-terminal tail of the hydrophobin SC16 is not required for rodlet formation.</title>
        <authorList>
            <person name="Vergunst K.L."/>
            <person name="Langelaan D.N."/>
        </authorList>
    </citation>
    <scope>X-RAY CRYSTALLOGRAPHY (2.00 ANGSTROMS) OF 18-114</scope>
    <scope>DISULFIDE BONDS</scope>
    <scope>SUBUNIT</scope>
    <scope>DOMAIN</scope>
</reference>
<evidence type="ECO:0000250" key="1">
    <source>
        <dbReference type="UniProtKB" id="P16933"/>
    </source>
</evidence>
<evidence type="ECO:0000255" key="2"/>
<evidence type="ECO:0000255" key="3">
    <source>
        <dbReference type="PROSITE-ProRule" id="PRU00498"/>
    </source>
</evidence>
<evidence type="ECO:0000269" key="4">
    <source>
    </source>
</evidence>
<evidence type="ECO:0000269" key="5">
    <source>
    </source>
</evidence>
<evidence type="ECO:0000303" key="6">
    <source>
    </source>
</evidence>
<evidence type="ECO:0000305" key="7"/>
<evidence type="ECO:0007744" key="8">
    <source>
        <dbReference type="PDB" id="2NBH"/>
    </source>
</evidence>
<evidence type="ECO:0007744" key="9">
    <source>
        <dbReference type="PDB" id="7S7S"/>
    </source>
</evidence>
<evidence type="ECO:0007744" key="10">
    <source>
        <dbReference type="PDB" id="7S86"/>
    </source>
</evidence>
<proteinExistence type="evidence at protein level"/>
<accession>D8QCG9</accession>
<feature type="signal peptide" evidence="2">
    <location>
        <begin position="1"/>
        <end position="17"/>
    </location>
</feature>
<feature type="chain" id="PRO_5013987843" description="Class I hydrophobin SC16">
    <location>
        <begin position="18"/>
        <end position="114"/>
    </location>
</feature>
<feature type="glycosylation site" description="N-linked (GlcNAc...) asparagine" evidence="3">
    <location>
        <position position="42"/>
    </location>
</feature>
<feature type="disulfide bond" evidence="4 5 8 9 10">
    <location>
        <begin position="33"/>
        <end position="93"/>
    </location>
</feature>
<feature type="disulfide bond" evidence="4 5 8 9 10">
    <location>
        <begin position="40"/>
        <end position="87"/>
    </location>
</feature>
<feature type="disulfide bond" evidence="4 5 8 9 10">
    <location>
        <begin position="41"/>
        <end position="74"/>
    </location>
</feature>
<feature type="disulfide bond" evidence="4 5 8 9 10">
    <location>
        <begin position="94"/>
        <end position="107"/>
    </location>
</feature>
<protein>
    <recommendedName>
        <fullName evidence="6">Class I hydrophobin SC16</fullName>
    </recommendedName>
</protein>
<name>SC16_SCHCM</name>